<evidence type="ECO:0000250" key="1"/>
<evidence type="ECO:0000255" key="2"/>
<evidence type="ECO:0000305" key="3"/>
<comment type="function">
    <text evidence="1">Pectinolytic enzymes consist of four classes of enzymes: pectin lyase, polygalacturonase, pectin methylesterase and rhamnogalacturonase. Among pectinolytic enzymes, pectin lyase is the most important in depolymerization of pectin, since it cleaves internal glycosidic bonds of highly methylated pectins (By similarity).</text>
</comment>
<comment type="catalytic activity">
    <reaction>
        <text>Eliminative cleavage of (1-&gt;4)-alpha-D-galacturonan methyl ester to give oligosaccharides with 4-deoxy-6-O-methyl-alpha-D-galact-4-enuronosyl groups at their non-reducing ends.</text>
        <dbReference type="EC" id="4.2.2.10"/>
    </reaction>
</comment>
<comment type="subcellular location">
    <subcellularLocation>
        <location evidence="1">Secreted</location>
    </subcellularLocation>
</comment>
<comment type="similarity">
    <text evidence="3">Belongs to the polysaccharide lyase 1 family.</text>
</comment>
<feature type="signal peptide" evidence="2">
    <location>
        <begin position="1"/>
        <end position="19"/>
    </location>
</feature>
<feature type="chain" id="PRO_0000394352" description="Probable pectin lyase D">
    <location>
        <begin position="20"/>
        <end position="375"/>
    </location>
</feature>
<feature type="active site" evidence="2">
    <location>
        <position position="255"/>
    </location>
</feature>
<feature type="glycosylation site" description="N-linked (GlcNAc...) asparagine" evidence="2">
    <location>
        <position position="128"/>
    </location>
</feature>
<feature type="disulfide bond" evidence="1">
    <location>
        <begin position="82"/>
        <end position="101"/>
    </location>
</feature>
<feature type="disulfide bond" evidence="1">
    <location>
        <begin position="91"/>
        <end position="225"/>
    </location>
</feature>
<feature type="disulfide bond" evidence="1">
    <location>
        <begin position="321"/>
        <end position="329"/>
    </location>
</feature>
<dbReference type="EC" id="4.2.2.10"/>
<dbReference type="EMBL" id="EQ963485">
    <property type="protein sequence ID" value="EED45375.1"/>
    <property type="molecule type" value="Genomic_DNA"/>
</dbReference>
<dbReference type="RefSeq" id="XP_002384311.1">
    <property type="nucleotide sequence ID" value="XM_002384270.1"/>
</dbReference>
<dbReference type="SMR" id="B8NVB7"/>
<dbReference type="STRING" id="332952.B8NVB7"/>
<dbReference type="GlyCosmos" id="B8NVB7">
    <property type="glycosylation" value="1 site, No reported glycans"/>
</dbReference>
<dbReference type="EnsemblFungi" id="EED45375">
    <property type="protein sequence ID" value="EED45375"/>
    <property type="gene ID" value="AFLA_116040"/>
</dbReference>
<dbReference type="VEuPathDB" id="FungiDB:AFLA_013566"/>
<dbReference type="eggNOG" id="ENOG502QXM6">
    <property type="taxonomic scope" value="Eukaryota"/>
</dbReference>
<dbReference type="HOGENOM" id="CLU_021980_0_1_1"/>
<dbReference type="OMA" id="NIGRQHI"/>
<dbReference type="GO" id="GO:0005576">
    <property type="term" value="C:extracellular region"/>
    <property type="evidence" value="ECO:0007669"/>
    <property type="project" value="UniProtKB-SubCell"/>
</dbReference>
<dbReference type="GO" id="GO:0030570">
    <property type="term" value="F:pectate lyase activity"/>
    <property type="evidence" value="ECO:0007669"/>
    <property type="project" value="InterPro"/>
</dbReference>
<dbReference type="GO" id="GO:0047490">
    <property type="term" value="F:pectin lyase activity"/>
    <property type="evidence" value="ECO:0000250"/>
    <property type="project" value="UniProtKB"/>
</dbReference>
<dbReference type="GO" id="GO:0071555">
    <property type="term" value="P:cell wall organization"/>
    <property type="evidence" value="ECO:0007669"/>
    <property type="project" value="UniProtKB-KW"/>
</dbReference>
<dbReference type="GO" id="GO:0045490">
    <property type="term" value="P:pectin catabolic process"/>
    <property type="evidence" value="ECO:0000250"/>
    <property type="project" value="UniProtKB"/>
</dbReference>
<dbReference type="FunFam" id="2.160.20.10:FF:000003">
    <property type="entry name" value="Pectin lyase F"/>
    <property type="match status" value="1"/>
</dbReference>
<dbReference type="Gene3D" id="2.160.20.10">
    <property type="entry name" value="Single-stranded right-handed beta-helix, Pectin lyase-like"/>
    <property type="match status" value="1"/>
</dbReference>
<dbReference type="InterPro" id="IPR002022">
    <property type="entry name" value="Pec_lyase"/>
</dbReference>
<dbReference type="InterPro" id="IPR012334">
    <property type="entry name" value="Pectin_lyas_fold"/>
</dbReference>
<dbReference type="InterPro" id="IPR011050">
    <property type="entry name" value="Pectin_lyase_fold/virulence"/>
</dbReference>
<dbReference type="InterPro" id="IPR045032">
    <property type="entry name" value="PEL"/>
</dbReference>
<dbReference type="PANTHER" id="PTHR31683">
    <property type="entry name" value="PECTATE LYASE 18-RELATED"/>
    <property type="match status" value="1"/>
</dbReference>
<dbReference type="PANTHER" id="PTHR31683:SF16">
    <property type="entry name" value="PECTIN LYASE A-RELATED"/>
    <property type="match status" value="1"/>
</dbReference>
<dbReference type="Pfam" id="PF00544">
    <property type="entry name" value="Pectate_lyase_4"/>
    <property type="match status" value="1"/>
</dbReference>
<dbReference type="SMART" id="SM00656">
    <property type="entry name" value="Amb_all"/>
    <property type="match status" value="1"/>
</dbReference>
<dbReference type="SUPFAM" id="SSF51126">
    <property type="entry name" value="Pectin lyase-like"/>
    <property type="match status" value="1"/>
</dbReference>
<protein>
    <recommendedName>
        <fullName>Probable pectin lyase D</fullName>
        <shortName>PLD</shortName>
        <ecNumber>4.2.2.10</ecNumber>
    </recommendedName>
</protein>
<organism>
    <name type="scientific">Aspergillus flavus (strain ATCC 200026 / FGSC A1120 / IAM 13836 / NRRL 3357 / JCM 12722 / SRRC 167)</name>
    <dbReference type="NCBI Taxonomy" id="332952"/>
    <lineage>
        <taxon>Eukaryota</taxon>
        <taxon>Fungi</taxon>
        <taxon>Dikarya</taxon>
        <taxon>Ascomycota</taxon>
        <taxon>Pezizomycotina</taxon>
        <taxon>Eurotiomycetes</taxon>
        <taxon>Eurotiomycetidae</taxon>
        <taxon>Eurotiales</taxon>
        <taxon>Aspergillaceae</taxon>
        <taxon>Aspergillus</taxon>
        <taxon>Aspergillus subgen. Circumdati</taxon>
    </lineage>
</organism>
<accession>B8NVB7</accession>
<gene>
    <name type="primary">pelD</name>
    <name type="ORF">AFLA_116040</name>
</gene>
<name>PELD_ASPFN</name>
<proteinExistence type="inferred from homology"/>
<reference key="1">
    <citation type="journal article" date="2015" name="Genome Announc.">
        <title>Genome sequence of Aspergillus flavus NRRL 3357, a strain that causes aflatoxin contamination of food and feed.</title>
        <authorList>
            <person name="Nierman W.C."/>
            <person name="Yu J."/>
            <person name="Fedorova-Abrams N.D."/>
            <person name="Losada L."/>
            <person name="Cleveland T.E."/>
            <person name="Bhatnagar D."/>
            <person name="Bennett J.W."/>
            <person name="Dean R."/>
            <person name="Payne G.A."/>
        </authorList>
    </citation>
    <scope>NUCLEOTIDE SEQUENCE [LARGE SCALE GENOMIC DNA]</scope>
    <source>
        <strain>ATCC 200026 / FGSC A1120 / IAM 13836 / NRRL 3357 / JCM 12722 / SRRC 167</strain>
    </source>
</reference>
<sequence length="375" mass="39230">MKYAAVLTTVAALASRALGAGVSGTAEGFASSATGGGSATAVYPTTTDELVSYLGDDEARVIVLSQTFDFTNTEGTTTETGCAPWGTGSACQVAINKDDWCTNYESSAPSTSVTYDNAGSLGITVNSNKSLIGEGTKGVIKGKGLRIVNGVENVIIQNIAVTDINPKYVWGGDAITINQADLVWIDHVTTARIGRQHYVLGTEADNRVTLSNNYIDGESDYSATCDGHHYWNVYLDGSSDKVTMKGNYFYKTSGRAPKVQGNTYLHAVNNYWNDNSNHAFEIGSGGYVLAEGNTFADVTAAVEDSSFEGELFSSSSDADTCSSYIGRACKANSFTNSGDLSGTTVDVLSKFKGETVATADTASTAPASNAGQGNL</sequence>
<keyword id="KW-0119">Carbohydrate metabolism</keyword>
<keyword id="KW-0961">Cell wall biogenesis/degradation</keyword>
<keyword id="KW-1015">Disulfide bond</keyword>
<keyword id="KW-0325">Glycoprotein</keyword>
<keyword id="KW-0456">Lyase</keyword>
<keyword id="KW-0624">Polysaccharide degradation</keyword>
<keyword id="KW-0964">Secreted</keyword>
<keyword id="KW-0732">Signal</keyword>